<dbReference type="EC" id="1.5.1.5" evidence="1"/>
<dbReference type="EC" id="3.5.4.9" evidence="1"/>
<dbReference type="EMBL" id="CP000387">
    <property type="protein sequence ID" value="ABN44109.1"/>
    <property type="molecule type" value="Genomic_DNA"/>
</dbReference>
<dbReference type="RefSeq" id="WP_002902603.1">
    <property type="nucleotide sequence ID" value="NC_009009.1"/>
</dbReference>
<dbReference type="RefSeq" id="YP_001034659.1">
    <property type="nucleotide sequence ID" value="NC_009009.1"/>
</dbReference>
<dbReference type="SMR" id="A3CLQ4"/>
<dbReference type="STRING" id="388919.SSA_0671"/>
<dbReference type="GeneID" id="48425094"/>
<dbReference type="KEGG" id="ssa:SSA_0671"/>
<dbReference type="PATRIC" id="fig|388919.9.peg.646"/>
<dbReference type="eggNOG" id="COG0190">
    <property type="taxonomic scope" value="Bacteria"/>
</dbReference>
<dbReference type="HOGENOM" id="CLU_034045_2_1_9"/>
<dbReference type="OrthoDB" id="9803580at2"/>
<dbReference type="UniPathway" id="UPA00193"/>
<dbReference type="Proteomes" id="UP000002148">
    <property type="component" value="Chromosome"/>
</dbReference>
<dbReference type="GO" id="GO:0005829">
    <property type="term" value="C:cytosol"/>
    <property type="evidence" value="ECO:0007669"/>
    <property type="project" value="TreeGrafter"/>
</dbReference>
<dbReference type="GO" id="GO:0004477">
    <property type="term" value="F:methenyltetrahydrofolate cyclohydrolase activity"/>
    <property type="evidence" value="ECO:0007669"/>
    <property type="project" value="UniProtKB-UniRule"/>
</dbReference>
<dbReference type="GO" id="GO:0004488">
    <property type="term" value="F:methylenetetrahydrofolate dehydrogenase (NADP+) activity"/>
    <property type="evidence" value="ECO:0007669"/>
    <property type="project" value="UniProtKB-UniRule"/>
</dbReference>
<dbReference type="GO" id="GO:0000105">
    <property type="term" value="P:L-histidine biosynthetic process"/>
    <property type="evidence" value="ECO:0007669"/>
    <property type="project" value="UniProtKB-KW"/>
</dbReference>
<dbReference type="GO" id="GO:0009086">
    <property type="term" value="P:methionine biosynthetic process"/>
    <property type="evidence" value="ECO:0007669"/>
    <property type="project" value="UniProtKB-KW"/>
</dbReference>
<dbReference type="GO" id="GO:0006164">
    <property type="term" value="P:purine nucleotide biosynthetic process"/>
    <property type="evidence" value="ECO:0007669"/>
    <property type="project" value="UniProtKB-KW"/>
</dbReference>
<dbReference type="GO" id="GO:0035999">
    <property type="term" value="P:tetrahydrofolate interconversion"/>
    <property type="evidence" value="ECO:0007669"/>
    <property type="project" value="UniProtKB-UniRule"/>
</dbReference>
<dbReference type="CDD" id="cd01080">
    <property type="entry name" value="NAD_bind_m-THF_DH_Cyclohyd"/>
    <property type="match status" value="1"/>
</dbReference>
<dbReference type="FunFam" id="3.40.50.720:FF:000094">
    <property type="entry name" value="Bifunctional protein FolD"/>
    <property type="match status" value="1"/>
</dbReference>
<dbReference type="FunFam" id="3.40.50.10860:FF:000005">
    <property type="entry name" value="C-1-tetrahydrofolate synthase, cytoplasmic, putative"/>
    <property type="match status" value="1"/>
</dbReference>
<dbReference type="Gene3D" id="3.40.50.10860">
    <property type="entry name" value="Leucine Dehydrogenase, chain A, domain 1"/>
    <property type="match status" value="1"/>
</dbReference>
<dbReference type="Gene3D" id="3.40.50.720">
    <property type="entry name" value="NAD(P)-binding Rossmann-like Domain"/>
    <property type="match status" value="1"/>
</dbReference>
<dbReference type="HAMAP" id="MF_01576">
    <property type="entry name" value="THF_DHG_CYH"/>
    <property type="match status" value="1"/>
</dbReference>
<dbReference type="InterPro" id="IPR046346">
    <property type="entry name" value="Aminoacid_DH-like_N_sf"/>
</dbReference>
<dbReference type="InterPro" id="IPR036291">
    <property type="entry name" value="NAD(P)-bd_dom_sf"/>
</dbReference>
<dbReference type="InterPro" id="IPR000672">
    <property type="entry name" value="THF_DH/CycHdrlase"/>
</dbReference>
<dbReference type="InterPro" id="IPR020630">
    <property type="entry name" value="THF_DH/CycHdrlase_cat_dom"/>
</dbReference>
<dbReference type="InterPro" id="IPR020867">
    <property type="entry name" value="THF_DH/CycHdrlase_CS"/>
</dbReference>
<dbReference type="InterPro" id="IPR020631">
    <property type="entry name" value="THF_DH/CycHdrlase_NAD-bd_dom"/>
</dbReference>
<dbReference type="NCBIfam" id="NF008058">
    <property type="entry name" value="PRK10792.1"/>
    <property type="match status" value="1"/>
</dbReference>
<dbReference type="NCBIfam" id="NF010776">
    <property type="entry name" value="PRK14179.1"/>
    <property type="match status" value="1"/>
</dbReference>
<dbReference type="NCBIfam" id="NF010783">
    <property type="entry name" value="PRK14186.1"/>
    <property type="match status" value="1"/>
</dbReference>
<dbReference type="PANTHER" id="PTHR48099:SF5">
    <property type="entry name" value="C-1-TETRAHYDROFOLATE SYNTHASE, CYTOPLASMIC"/>
    <property type="match status" value="1"/>
</dbReference>
<dbReference type="PANTHER" id="PTHR48099">
    <property type="entry name" value="C-1-TETRAHYDROFOLATE SYNTHASE, CYTOPLASMIC-RELATED"/>
    <property type="match status" value="1"/>
</dbReference>
<dbReference type="Pfam" id="PF00763">
    <property type="entry name" value="THF_DHG_CYH"/>
    <property type="match status" value="1"/>
</dbReference>
<dbReference type="Pfam" id="PF02882">
    <property type="entry name" value="THF_DHG_CYH_C"/>
    <property type="match status" value="1"/>
</dbReference>
<dbReference type="PRINTS" id="PR00085">
    <property type="entry name" value="THFDHDRGNASE"/>
</dbReference>
<dbReference type="SUPFAM" id="SSF53223">
    <property type="entry name" value="Aminoacid dehydrogenase-like, N-terminal domain"/>
    <property type="match status" value="1"/>
</dbReference>
<dbReference type="SUPFAM" id="SSF51735">
    <property type="entry name" value="NAD(P)-binding Rossmann-fold domains"/>
    <property type="match status" value="1"/>
</dbReference>
<dbReference type="PROSITE" id="PS00766">
    <property type="entry name" value="THF_DHG_CYH_1"/>
    <property type="match status" value="1"/>
</dbReference>
<dbReference type="PROSITE" id="PS00767">
    <property type="entry name" value="THF_DHG_CYH_2"/>
    <property type="match status" value="1"/>
</dbReference>
<comment type="function">
    <text evidence="1">Catalyzes the oxidation of 5,10-methylenetetrahydrofolate to 5,10-methenyltetrahydrofolate and then the hydrolysis of 5,10-methenyltetrahydrofolate to 10-formyltetrahydrofolate.</text>
</comment>
<comment type="catalytic activity">
    <reaction evidence="1">
        <text>(6R)-5,10-methylene-5,6,7,8-tetrahydrofolate + NADP(+) = (6R)-5,10-methenyltetrahydrofolate + NADPH</text>
        <dbReference type="Rhea" id="RHEA:22812"/>
        <dbReference type="ChEBI" id="CHEBI:15636"/>
        <dbReference type="ChEBI" id="CHEBI:57455"/>
        <dbReference type="ChEBI" id="CHEBI:57783"/>
        <dbReference type="ChEBI" id="CHEBI:58349"/>
        <dbReference type="EC" id="1.5.1.5"/>
    </reaction>
</comment>
<comment type="catalytic activity">
    <reaction evidence="1">
        <text>(6R)-5,10-methenyltetrahydrofolate + H2O = (6R)-10-formyltetrahydrofolate + H(+)</text>
        <dbReference type="Rhea" id="RHEA:23700"/>
        <dbReference type="ChEBI" id="CHEBI:15377"/>
        <dbReference type="ChEBI" id="CHEBI:15378"/>
        <dbReference type="ChEBI" id="CHEBI:57455"/>
        <dbReference type="ChEBI" id="CHEBI:195366"/>
        <dbReference type="EC" id="3.5.4.9"/>
    </reaction>
</comment>
<comment type="pathway">
    <text evidence="1">One-carbon metabolism; tetrahydrofolate interconversion.</text>
</comment>
<comment type="subunit">
    <text evidence="1">Homodimer.</text>
</comment>
<comment type="similarity">
    <text evidence="1">Belongs to the tetrahydrofolate dehydrogenase/cyclohydrolase family.</text>
</comment>
<keyword id="KW-0028">Amino-acid biosynthesis</keyword>
<keyword id="KW-0368">Histidine biosynthesis</keyword>
<keyword id="KW-0378">Hydrolase</keyword>
<keyword id="KW-0486">Methionine biosynthesis</keyword>
<keyword id="KW-0511">Multifunctional enzyme</keyword>
<keyword id="KW-0521">NADP</keyword>
<keyword id="KW-0554">One-carbon metabolism</keyword>
<keyword id="KW-0560">Oxidoreductase</keyword>
<keyword id="KW-0658">Purine biosynthesis</keyword>
<keyword id="KW-1185">Reference proteome</keyword>
<gene>
    <name evidence="1" type="primary">folD</name>
    <name type="ordered locus">SSA_0671</name>
</gene>
<protein>
    <recommendedName>
        <fullName evidence="1">Bifunctional protein FolD</fullName>
    </recommendedName>
    <domain>
        <recommendedName>
            <fullName evidence="1">Methylenetetrahydrofolate dehydrogenase</fullName>
            <ecNumber evidence="1">1.5.1.5</ecNumber>
        </recommendedName>
    </domain>
    <domain>
        <recommendedName>
            <fullName evidence="1">Methenyltetrahydrofolate cyclohydrolase</fullName>
            <ecNumber evidence="1">3.5.4.9</ecNumber>
        </recommendedName>
    </domain>
</protein>
<reference key="1">
    <citation type="journal article" date="2007" name="J. Bacteriol.">
        <title>Genome of the opportunistic pathogen Streptococcus sanguinis.</title>
        <authorList>
            <person name="Xu P."/>
            <person name="Alves J.M."/>
            <person name="Kitten T."/>
            <person name="Brown A."/>
            <person name="Chen Z."/>
            <person name="Ozaki L.S."/>
            <person name="Manque P."/>
            <person name="Ge X."/>
            <person name="Serrano M.G."/>
            <person name="Puiu D."/>
            <person name="Hendricks S."/>
            <person name="Wang Y."/>
            <person name="Chaplin M.D."/>
            <person name="Akan D."/>
            <person name="Paik S."/>
            <person name="Peterson D.L."/>
            <person name="Macrina F.L."/>
            <person name="Buck G.A."/>
        </authorList>
    </citation>
    <scope>NUCLEOTIDE SEQUENCE [LARGE SCALE GENOMIC DNA]</scope>
    <source>
        <strain>SK36</strain>
    </source>
</reference>
<sequence length="284" mass="31021">MAQIIDGRGLAEKLQKKLAEKTARLKEKTGQVPGLVVIVVGNNPASQIYVRNKERSALAAGFRSKVERLPEETSQEELLSLIETYNQNPDWHGILVQLPLPEHIDDEAVLLAIDPDKDVDGFHPLNMGKLWSGHPVMIPATPAGIMAMFHEYGIELEGKRAVVIGRSNIVGKPMAQLLLAKNATVTLTHSRTHNLAKTAKRADILVVAIGRGHFVTKNFVKEGAVVIDVGMNRDENGKLIGDVKFDEVAEIASLITPVPGGVGPMTITMLMEQTYQAFKRSLES</sequence>
<evidence type="ECO:0000255" key="1">
    <source>
        <dbReference type="HAMAP-Rule" id="MF_01576"/>
    </source>
</evidence>
<name>FOLD_STRSV</name>
<accession>A3CLQ4</accession>
<feature type="chain" id="PRO_0000305884" description="Bifunctional protein FolD">
    <location>
        <begin position="1"/>
        <end position="284"/>
    </location>
</feature>
<feature type="binding site" evidence="1">
    <location>
        <begin position="165"/>
        <end position="167"/>
    </location>
    <ligand>
        <name>NADP(+)</name>
        <dbReference type="ChEBI" id="CHEBI:58349"/>
    </ligand>
</feature>
<feature type="binding site" evidence="1">
    <location>
        <position position="190"/>
    </location>
    <ligand>
        <name>NADP(+)</name>
        <dbReference type="ChEBI" id="CHEBI:58349"/>
    </ligand>
</feature>
<organism>
    <name type="scientific">Streptococcus sanguinis (strain SK36)</name>
    <dbReference type="NCBI Taxonomy" id="388919"/>
    <lineage>
        <taxon>Bacteria</taxon>
        <taxon>Bacillati</taxon>
        <taxon>Bacillota</taxon>
        <taxon>Bacilli</taxon>
        <taxon>Lactobacillales</taxon>
        <taxon>Streptococcaceae</taxon>
        <taxon>Streptococcus</taxon>
    </lineage>
</organism>
<proteinExistence type="inferred from homology"/>